<proteinExistence type="evidence at protein level"/>
<organism>
    <name type="scientific">Schizosaccharomyces pombe (strain 972 / ATCC 24843)</name>
    <name type="common">Fission yeast</name>
    <dbReference type="NCBI Taxonomy" id="284812"/>
    <lineage>
        <taxon>Eukaryota</taxon>
        <taxon>Fungi</taxon>
        <taxon>Dikarya</taxon>
        <taxon>Ascomycota</taxon>
        <taxon>Taphrinomycotina</taxon>
        <taxon>Schizosaccharomycetes</taxon>
        <taxon>Schizosaccharomycetales</taxon>
        <taxon>Schizosaccharomycetaceae</taxon>
        <taxon>Schizosaccharomyces</taxon>
    </lineage>
</organism>
<protein>
    <recommendedName>
        <fullName>ENTH domain-containing protein C19F8.03c</fullName>
    </recommendedName>
</protein>
<feature type="chain" id="PRO_0000303952" description="ENTH domain-containing protein C19F8.03c">
    <location>
        <begin position="1"/>
        <end position="649"/>
    </location>
</feature>
<feature type="domain" description="ENTH" evidence="1">
    <location>
        <begin position="2"/>
        <end position="136"/>
    </location>
</feature>
<feature type="region of interest" description="Disordered" evidence="2">
    <location>
        <begin position="280"/>
        <end position="382"/>
    </location>
</feature>
<feature type="region of interest" description="Disordered" evidence="2">
    <location>
        <begin position="409"/>
        <end position="440"/>
    </location>
</feature>
<feature type="region of interest" description="Disordered" evidence="2">
    <location>
        <begin position="590"/>
        <end position="649"/>
    </location>
</feature>
<feature type="compositionally biased region" description="Basic residues" evidence="2">
    <location>
        <begin position="299"/>
        <end position="308"/>
    </location>
</feature>
<feature type="compositionally biased region" description="Polar residues" evidence="2">
    <location>
        <begin position="313"/>
        <end position="326"/>
    </location>
</feature>
<feature type="compositionally biased region" description="Polar residues" evidence="2">
    <location>
        <begin position="340"/>
        <end position="349"/>
    </location>
</feature>
<feature type="compositionally biased region" description="Acidic residues" evidence="2">
    <location>
        <begin position="352"/>
        <end position="381"/>
    </location>
</feature>
<feature type="compositionally biased region" description="Polar residues" evidence="2">
    <location>
        <begin position="409"/>
        <end position="418"/>
    </location>
</feature>
<feature type="compositionally biased region" description="Polar residues" evidence="2">
    <location>
        <begin position="614"/>
        <end position="624"/>
    </location>
</feature>
<feature type="compositionally biased region" description="Polar residues" evidence="2">
    <location>
        <begin position="635"/>
        <end position="649"/>
    </location>
</feature>
<feature type="modified residue" description="Phosphoserine" evidence="4">
    <location>
        <position position="285"/>
    </location>
</feature>
<feature type="modified residue" description="Phosphoserine" evidence="4">
    <location>
        <position position="287"/>
    </location>
</feature>
<feature type="modified residue" description="Phosphothreonine" evidence="4">
    <location>
        <position position="414"/>
    </location>
</feature>
<feature type="modified residue" description="Phosphoserine" evidence="4">
    <location>
        <position position="417"/>
    </location>
</feature>
<gene>
    <name type="ORF">SPBC19F8.03c</name>
</gene>
<reference key="1">
    <citation type="journal article" date="2002" name="Nature">
        <title>The genome sequence of Schizosaccharomyces pombe.</title>
        <authorList>
            <person name="Wood V."/>
            <person name="Gwilliam R."/>
            <person name="Rajandream M.A."/>
            <person name="Lyne M.H."/>
            <person name="Lyne R."/>
            <person name="Stewart A."/>
            <person name="Sgouros J.G."/>
            <person name="Peat N."/>
            <person name="Hayles J."/>
            <person name="Baker S.G."/>
            <person name="Basham D."/>
            <person name="Bowman S."/>
            <person name="Brooks K."/>
            <person name="Brown D."/>
            <person name="Brown S."/>
            <person name="Chillingworth T."/>
            <person name="Churcher C.M."/>
            <person name="Collins M."/>
            <person name="Connor R."/>
            <person name="Cronin A."/>
            <person name="Davis P."/>
            <person name="Feltwell T."/>
            <person name="Fraser A."/>
            <person name="Gentles S."/>
            <person name="Goble A."/>
            <person name="Hamlin N."/>
            <person name="Harris D.E."/>
            <person name="Hidalgo J."/>
            <person name="Hodgson G."/>
            <person name="Holroyd S."/>
            <person name="Hornsby T."/>
            <person name="Howarth S."/>
            <person name="Huckle E.J."/>
            <person name="Hunt S."/>
            <person name="Jagels K."/>
            <person name="James K.D."/>
            <person name="Jones L."/>
            <person name="Jones M."/>
            <person name="Leather S."/>
            <person name="McDonald S."/>
            <person name="McLean J."/>
            <person name="Mooney P."/>
            <person name="Moule S."/>
            <person name="Mungall K.L."/>
            <person name="Murphy L.D."/>
            <person name="Niblett D."/>
            <person name="Odell C."/>
            <person name="Oliver K."/>
            <person name="O'Neil S."/>
            <person name="Pearson D."/>
            <person name="Quail M.A."/>
            <person name="Rabbinowitsch E."/>
            <person name="Rutherford K.M."/>
            <person name="Rutter S."/>
            <person name="Saunders D."/>
            <person name="Seeger K."/>
            <person name="Sharp S."/>
            <person name="Skelton J."/>
            <person name="Simmonds M.N."/>
            <person name="Squares R."/>
            <person name="Squares S."/>
            <person name="Stevens K."/>
            <person name="Taylor K."/>
            <person name="Taylor R.G."/>
            <person name="Tivey A."/>
            <person name="Walsh S.V."/>
            <person name="Warren T."/>
            <person name="Whitehead S."/>
            <person name="Woodward J.R."/>
            <person name="Volckaert G."/>
            <person name="Aert R."/>
            <person name="Robben J."/>
            <person name="Grymonprez B."/>
            <person name="Weltjens I."/>
            <person name="Vanstreels E."/>
            <person name="Rieger M."/>
            <person name="Schaefer M."/>
            <person name="Mueller-Auer S."/>
            <person name="Gabel C."/>
            <person name="Fuchs M."/>
            <person name="Duesterhoeft A."/>
            <person name="Fritzc C."/>
            <person name="Holzer E."/>
            <person name="Moestl D."/>
            <person name="Hilbert H."/>
            <person name="Borzym K."/>
            <person name="Langer I."/>
            <person name="Beck A."/>
            <person name="Lehrach H."/>
            <person name="Reinhardt R."/>
            <person name="Pohl T.M."/>
            <person name="Eger P."/>
            <person name="Zimmermann W."/>
            <person name="Wedler H."/>
            <person name="Wambutt R."/>
            <person name="Purnelle B."/>
            <person name="Goffeau A."/>
            <person name="Cadieu E."/>
            <person name="Dreano S."/>
            <person name="Gloux S."/>
            <person name="Lelaure V."/>
            <person name="Mottier S."/>
            <person name="Galibert F."/>
            <person name="Aves S.J."/>
            <person name="Xiang Z."/>
            <person name="Hunt C."/>
            <person name="Moore K."/>
            <person name="Hurst S.M."/>
            <person name="Lucas M."/>
            <person name="Rochet M."/>
            <person name="Gaillardin C."/>
            <person name="Tallada V.A."/>
            <person name="Garzon A."/>
            <person name="Thode G."/>
            <person name="Daga R.R."/>
            <person name="Cruzado L."/>
            <person name="Jimenez J."/>
            <person name="Sanchez M."/>
            <person name="del Rey F."/>
            <person name="Benito J."/>
            <person name="Dominguez A."/>
            <person name="Revuelta J.L."/>
            <person name="Moreno S."/>
            <person name="Armstrong J."/>
            <person name="Forsburg S.L."/>
            <person name="Cerutti L."/>
            <person name="Lowe T."/>
            <person name="McCombie W.R."/>
            <person name="Paulsen I."/>
            <person name="Potashkin J."/>
            <person name="Shpakovski G.V."/>
            <person name="Ussery D."/>
            <person name="Barrell B.G."/>
            <person name="Nurse P."/>
        </authorList>
    </citation>
    <scope>NUCLEOTIDE SEQUENCE [LARGE SCALE GENOMIC DNA]</scope>
    <source>
        <strain>972 / ATCC 24843</strain>
    </source>
</reference>
<reference key="2">
    <citation type="journal article" date="2006" name="Nat. Biotechnol.">
        <title>ORFeome cloning and global analysis of protein localization in the fission yeast Schizosaccharomyces pombe.</title>
        <authorList>
            <person name="Matsuyama A."/>
            <person name="Arai R."/>
            <person name="Yashiroda Y."/>
            <person name="Shirai A."/>
            <person name="Kamata A."/>
            <person name="Sekido S."/>
            <person name="Kobayashi Y."/>
            <person name="Hashimoto A."/>
            <person name="Hamamoto M."/>
            <person name="Hiraoka Y."/>
            <person name="Horinouchi S."/>
            <person name="Yoshida M."/>
        </authorList>
    </citation>
    <scope>SUBCELLULAR LOCATION [LARGE SCALE ANALYSIS]</scope>
</reference>
<reference key="3">
    <citation type="journal article" date="2008" name="J. Proteome Res.">
        <title>Phosphoproteome analysis of fission yeast.</title>
        <authorList>
            <person name="Wilson-Grady J.T."/>
            <person name="Villen J."/>
            <person name="Gygi S.P."/>
        </authorList>
    </citation>
    <scope>PHOSPHORYLATION [LARGE SCALE ANALYSIS] AT SER-285; SER-287; THR-414 AND SER-417</scope>
    <scope>IDENTIFICATION BY MASS SPECTROMETRY</scope>
</reference>
<dbReference type="EMBL" id="CU329671">
    <property type="protein sequence ID" value="CAA19123.1"/>
    <property type="molecule type" value="Genomic_DNA"/>
</dbReference>
<dbReference type="PIR" id="T39826">
    <property type="entry name" value="T39826"/>
</dbReference>
<dbReference type="SMR" id="O60167"/>
<dbReference type="BioGRID" id="277226">
    <property type="interactions" value="11"/>
</dbReference>
<dbReference type="FunCoup" id="O60167">
    <property type="interactions" value="7"/>
</dbReference>
<dbReference type="STRING" id="284812.O60167"/>
<dbReference type="iPTMnet" id="O60167"/>
<dbReference type="PaxDb" id="4896-SPBC19F8.03c.1"/>
<dbReference type="EnsemblFungi" id="SPBC19F8.03c.1">
    <property type="protein sequence ID" value="SPBC19F8.03c.1:pep"/>
    <property type="gene ID" value="SPBC19F8.03c"/>
</dbReference>
<dbReference type="KEGG" id="spo:2540702"/>
<dbReference type="PomBase" id="SPBC19F8.03c"/>
<dbReference type="VEuPathDB" id="FungiDB:SPBC19F8.03c"/>
<dbReference type="eggNOG" id="KOG0251">
    <property type="taxonomic scope" value="Eukaryota"/>
</dbReference>
<dbReference type="HOGENOM" id="CLU_014248_2_0_1"/>
<dbReference type="InParanoid" id="O60167"/>
<dbReference type="PRO" id="PR:O60167"/>
<dbReference type="Proteomes" id="UP000002485">
    <property type="component" value="Chromosome II"/>
</dbReference>
<dbReference type="GO" id="GO:0030479">
    <property type="term" value="C:actin cortical patch"/>
    <property type="evidence" value="ECO:0000266"/>
    <property type="project" value="PomBase"/>
</dbReference>
<dbReference type="GO" id="GO:0005905">
    <property type="term" value="C:clathrin-coated pit"/>
    <property type="evidence" value="ECO:0000318"/>
    <property type="project" value="GO_Central"/>
</dbReference>
<dbReference type="GO" id="GO:0030136">
    <property type="term" value="C:clathrin-coated vesicle"/>
    <property type="evidence" value="ECO:0000318"/>
    <property type="project" value="GO_Central"/>
</dbReference>
<dbReference type="GO" id="GO:0005829">
    <property type="term" value="C:cytosol"/>
    <property type="evidence" value="ECO:0007005"/>
    <property type="project" value="PomBase"/>
</dbReference>
<dbReference type="GO" id="GO:0005545">
    <property type="term" value="F:1-phosphatidylinositol binding"/>
    <property type="evidence" value="ECO:0000318"/>
    <property type="project" value="GO_Central"/>
</dbReference>
<dbReference type="GO" id="GO:0140312">
    <property type="term" value="F:cargo adaptor activity"/>
    <property type="evidence" value="ECO:0000304"/>
    <property type="project" value="PomBase"/>
</dbReference>
<dbReference type="GO" id="GO:0032050">
    <property type="term" value="F:clathrin heavy chain binding"/>
    <property type="evidence" value="ECO:0000318"/>
    <property type="project" value="GO_Central"/>
</dbReference>
<dbReference type="GO" id="GO:0005546">
    <property type="term" value="F:phosphatidylinositol-4,5-bisphosphate binding"/>
    <property type="evidence" value="ECO:0000318"/>
    <property type="project" value="GO_Central"/>
</dbReference>
<dbReference type="GO" id="GO:0000149">
    <property type="term" value="F:SNARE binding"/>
    <property type="evidence" value="ECO:0000318"/>
    <property type="project" value="GO_Central"/>
</dbReference>
<dbReference type="GO" id="GO:0048268">
    <property type="term" value="P:clathrin coat assembly"/>
    <property type="evidence" value="ECO:0007669"/>
    <property type="project" value="InterPro"/>
</dbReference>
<dbReference type="GO" id="GO:0072583">
    <property type="term" value="P:clathrin-dependent endocytosis"/>
    <property type="evidence" value="ECO:0000318"/>
    <property type="project" value="GO_Central"/>
</dbReference>
<dbReference type="GO" id="GO:0006886">
    <property type="term" value="P:intracellular protein transport"/>
    <property type="evidence" value="ECO:0000303"/>
    <property type="project" value="PomBase"/>
</dbReference>
<dbReference type="GO" id="GO:0006900">
    <property type="term" value="P:vesicle budding from membrane"/>
    <property type="evidence" value="ECO:0000318"/>
    <property type="project" value="GO_Central"/>
</dbReference>
<dbReference type="CDD" id="cd16988">
    <property type="entry name" value="ANTH_N_YAP180"/>
    <property type="match status" value="1"/>
</dbReference>
<dbReference type="FunFam" id="1.20.58.150:FF:000004">
    <property type="entry name" value="ENTH domain protein"/>
    <property type="match status" value="1"/>
</dbReference>
<dbReference type="Gene3D" id="1.25.40.90">
    <property type="match status" value="1"/>
</dbReference>
<dbReference type="Gene3D" id="1.20.58.150">
    <property type="entry name" value="ANTH domain"/>
    <property type="match status" value="1"/>
</dbReference>
<dbReference type="InterPro" id="IPR011417">
    <property type="entry name" value="ANTH_dom"/>
</dbReference>
<dbReference type="InterPro" id="IPR014712">
    <property type="entry name" value="ANTH_dom_sf"/>
</dbReference>
<dbReference type="InterPro" id="IPR045192">
    <property type="entry name" value="AP180-like"/>
</dbReference>
<dbReference type="InterPro" id="IPR013809">
    <property type="entry name" value="ENTH"/>
</dbReference>
<dbReference type="InterPro" id="IPR008942">
    <property type="entry name" value="ENTH_VHS"/>
</dbReference>
<dbReference type="PANTHER" id="PTHR22951">
    <property type="entry name" value="CLATHRIN ASSEMBLY PROTEIN"/>
    <property type="match status" value="1"/>
</dbReference>
<dbReference type="PANTHER" id="PTHR22951:SF5">
    <property type="entry name" value="PHOSPHATIDYLINOSITOL-BINDING CLATHRIN ASSEMBLY PROTEIN LAP"/>
    <property type="match status" value="1"/>
</dbReference>
<dbReference type="Pfam" id="PF07651">
    <property type="entry name" value="ANTH"/>
    <property type="match status" value="1"/>
</dbReference>
<dbReference type="SMART" id="SM00273">
    <property type="entry name" value="ENTH"/>
    <property type="match status" value="1"/>
</dbReference>
<dbReference type="SUPFAM" id="SSF48464">
    <property type="entry name" value="ENTH/VHS domain"/>
    <property type="match status" value="1"/>
</dbReference>
<dbReference type="SUPFAM" id="SSF89009">
    <property type="entry name" value="GAT-like domain"/>
    <property type="match status" value="1"/>
</dbReference>
<dbReference type="PROSITE" id="PS50942">
    <property type="entry name" value="ENTH"/>
    <property type="match status" value="1"/>
</dbReference>
<comment type="subcellular location">
    <subcellularLocation>
        <location evidence="3">Cytoplasm</location>
    </subcellularLocation>
</comment>
<sequence>MSPSKWLLTYERAVKKATKVKLAAPKYKHVEIILEATTEDPETLENVIQALCERLKEQSWTIVFKTLIVFHVMLKEGAPNTTIVALSQRPRILEVLKASSLLAQGKNIYNYSRFLSERAKQYGRLGVDYAQVGDAPKKKIREMKLENGLLRNVEGIQAQLRRLIKCQFVAEEIDNDIAITAFRLLVGDLLVLFKAVNIGVINVLEHYFEMGHHDAAQSLRIYKTFVNQTEDIINYLSTARSLEFVTKFPVPNIKHAPISLTASLEEYLNDPDFEENRKQYLQNKSGSPVEETAILNRKPTLRKKKSIPKKQNESSSTIQKENTVQQEASSSEEEAVKSLPETQRTTSRIETQEEEIKEEEMEGEEEEEEEEVPNYESENELEDKVGDLSLSLGVASSFVDEMLRERNNLSAEGTSASPSLDKKSESTNIVQPIPSHPNDSLNPFYNSSSPTYHPQPIPPQLQQVQLLSQMAGNQMANIQYTMNGMQQTGASPNTALNISQVNMYAQNNPVNPSTTNPFQNFLRQPSYQGMQFEQQQPTTIPLQPNIPVLNQQYPVMIPAMEDSRGPLPSPAHIMYPEGSPGFIQHSPNGFTHGHSASPVNIGQKLDVPERPMSTPYTASKNPFSTRELAEPTDLARNSISTESKNPFRS</sequence>
<keyword id="KW-0963">Cytoplasm</keyword>
<keyword id="KW-0597">Phosphoprotein</keyword>
<keyword id="KW-1185">Reference proteome</keyword>
<evidence type="ECO:0000255" key="1">
    <source>
        <dbReference type="PROSITE-ProRule" id="PRU00243"/>
    </source>
</evidence>
<evidence type="ECO:0000256" key="2">
    <source>
        <dbReference type="SAM" id="MobiDB-lite"/>
    </source>
</evidence>
<evidence type="ECO:0000269" key="3">
    <source>
    </source>
</evidence>
<evidence type="ECO:0000269" key="4">
    <source>
    </source>
</evidence>
<accession>O60167</accession>
<name>YHC3_SCHPO</name>